<accession>Q5N7C7</accession>
<name>LG2_ORYSJ</name>
<feature type="chain" id="PRO_0000437015" description="Transcription factor LG2">
    <location>
        <begin position="1"/>
        <end position="539"/>
    </location>
</feature>
<feature type="domain" description="bZIP" evidence="2">
    <location>
        <begin position="227"/>
        <end position="271"/>
    </location>
</feature>
<feature type="domain" description="DOG1" evidence="3">
    <location>
        <begin position="292"/>
        <end position="506"/>
    </location>
</feature>
<feature type="region of interest" description="Disordered" evidence="4">
    <location>
        <begin position="115"/>
        <end position="140"/>
    </location>
</feature>
<feature type="region of interest" description="Disordered" evidence="4">
    <location>
        <begin position="181"/>
        <end position="246"/>
    </location>
</feature>
<feature type="region of interest" description="Basic motif" evidence="2">
    <location>
        <begin position="229"/>
        <end position="249"/>
    </location>
</feature>
<feature type="region of interest" description="Leucine-zipper" evidence="2">
    <location>
        <begin position="255"/>
        <end position="269"/>
    </location>
</feature>
<feature type="region of interest" description="Disordered" evidence="4">
    <location>
        <begin position="513"/>
        <end position="539"/>
    </location>
</feature>
<feature type="compositionally biased region" description="Polar residues" evidence="4">
    <location>
        <begin position="115"/>
        <end position="125"/>
    </location>
</feature>
<feature type="compositionally biased region" description="Low complexity" evidence="4">
    <location>
        <begin position="126"/>
        <end position="137"/>
    </location>
</feature>
<feature type="compositionally biased region" description="Low complexity" evidence="4">
    <location>
        <begin position="192"/>
        <end position="205"/>
    </location>
</feature>
<feature type="compositionally biased region" description="Basic and acidic residues" evidence="4">
    <location>
        <begin position="219"/>
        <end position="242"/>
    </location>
</feature>
<gene>
    <name evidence="8" type="primary">LG2</name>
    <name evidence="14" type="ordered locus">Os01g0859500</name>
    <name evidence="11" type="ordered locus">LOC_Os01g64020</name>
    <name evidence="15" type="ORF">OsJ_04144</name>
    <name evidence="13" type="ORF">P0489B03.13</name>
    <name evidence="12" type="ORF">P0679C12.3</name>
</gene>
<comment type="function">
    <text evidence="1 6">Transcriptional regulator involved in defense response (By similarity). Acts as a transcriptional activator in vitro (PubMed:22353606).</text>
</comment>
<comment type="subunit">
    <text evidence="7">Interacts with NPR1/NH1 and NPR3/NH3.</text>
</comment>
<comment type="subcellular location">
    <subcellularLocation>
        <location evidence="2">Nucleus</location>
    </subcellularLocation>
</comment>
<comment type="disruption phenotype">
    <text evidence="5">No visible phenotype under normal growth conditions.</text>
</comment>
<comment type="similarity">
    <text evidence="11">Belongs to the bZIP family.</text>
</comment>
<protein>
    <recommendedName>
        <fullName evidence="11">Transcription factor LG2</fullName>
    </recommendedName>
    <alternativeName>
        <fullName evidence="11">Protein LIGULELESS 2 homolog</fullName>
        <shortName evidence="8">OsLG2</shortName>
        <shortName evidence="10">rLG2</shortName>
    </alternativeName>
    <alternativeName>
        <fullName evidence="9">bZIP transcription factor 11</fullName>
        <shortName evidence="9">OsbZIP11</shortName>
    </alternativeName>
</protein>
<reference key="1">
    <citation type="journal article" date="2002" name="Nature">
        <title>The genome sequence and structure of rice chromosome 1.</title>
        <authorList>
            <person name="Sasaki T."/>
            <person name="Matsumoto T."/>
            <person name="Yamamoto K."/>
            <person name="Sakata K."/>
            <person name="Baba T."/>
            <person name="Katayose Y."/>
            <person name="Wu J."/>
            <person name="Niimura Y."/>
            <person name="Cheng Z."/>
            <person name="Nagamura Y."/>
            <person name="Antonio B.A."/>
            <person name="Kanamori H."/>
            <person name="Hosokawa S."/>
            <person name="Masukawa M."/>
            <person name="Arikawa K."/>
            <person name="Chiden Y."/>
            <person name="Hayashi M."/>
            <person name="Okamoto M."/>
            <person name="Ando T."/>
            <person name="Aoki H."/>
            <person name="Arita K."/>
            <person name="Hamada M."/>
            <person name="Harada C."/>
            <person name="Hijishita S."/>
            <person name="Honda M."/>
            <person name="Ichikawa Y."/>
            <person name="Idonuma A."/>
            <person name="Iijima M."/>
            <person name="Ikeda M."/>
            <person name="Ikeno M."/>
            <person name="Ito S."/>
            <person name="Ito T."/>
            <person name="Ito Y."/>
            <person name="Ito Y."/>
            <person name="Iwabuchi A."/>
            <person name="Kamiya K."/>
            <person name="Karasawa W."/>
            <person name="Katagiri S."/>
            <person name="Kikuta A."/>
            <person name="Kobayashi N."/>
            <person name="Kono I."/>
            <person name="Machita K."/>
            <person name="Maehara T."/>
            <person name="Mizuno H."/>
            <person name="Mizubayashi T."/>
            <person name="Mukai Y."/>
            <person name="Nagasaki H."/>
            <person name="Nakashima M."/>
            <person name="Nakama Y."/>
            <person name="Nakamichi Y."/>
            <person name="Nakamura M."/>
            <person name="Namiki N."/>
            <person name="Negishi M."/>
            <person name="Ohta I."/>
            <person name="Ono N."/>
            <person name="Saji S."/>
            <person name="Sakai K."/>
            <person name="Shibata M."/>
            <person name="Shimokawa T."/>
            <person name="Shomura A."/>
            <person name="Song J."/>
            <person name="Takazaki Y."/>
            <person name="Terasawa K."/>
            <person name="Tsuji K."/>
            <person name="Waki K."/>
            <person name="Yamagata H."/>
            <person name="Yamane H."/>
            <person name="Yoshiki S."/>
            <person name="Yoshihara R."/>
            <person name="Yukawa K."/>
            <person name="Zhong H."/>
            <person name="Iwama H."/>
            <person name="Endo T."/>
            <person name="Ito H."/>
            <person name="Hahn J.H."/>
            <person name="Kim H.-I."/>
            <person name="Eun M.-Y."/>
            <person name="Yano M."/>
            <person name="Jiang J."/>
            <person name="Gojobori T."/>
        </authorList>
    </citation>
    <scope>NUCLEOTIDE SEQUENCE [LARGE SCALE GENOMIC DNA]</scope>
    <source>
        <strain>cv. Nipponbare</strain>
    </source>
</reference>
<reference key="2">
    <citation type="journal article" date="2005" name="Nature">
        <title>The map-based sequence of the rice genome.</title>
        <authorList>
            <consortium name="International rice genome sequencing project (IRGSP)"/>
        </authorList>
    </citation>
    <scope>NUCLEOTIDE SEQUENCE [LARGE SCALE GENOMIC DNA]</scope>
    <source>
        <strain>cv. Nipponbare</strain>
    </source>
</reference>
<reference key="3">
    <citation type="journal article" date="2008" name="Nucleic Acids Res.">
        <title>The rice annotation project database (RAP-DB): 2008 update.</title>
        <authorList>
            <consortium name="The rice annotation project (RAP)"/>
        </authorList>
    </citation>
    <scope>GENOME REANNOTATION</scope>
    <source>
        <strain>cv. Nipponbare</strain>
    </source>
</reference>
<reference key="4">
    <citation type="journal article" date="2013" name="Rice">
        <title>Improvement of the Oryza sativa Nipponbare reference genome using next generation sequence and optical map data.</title>
        <authorList>
            <person name="Kawahara Y."/>
            <person name="de la Bastide M."/>
            <person name="Hamilton J.P."/>
            <person name="Kanamori H."/>
            <person name="McCombie W.R."/>
            <person name="Ouyang S."/>
            <person name="Schwartz D.C."/>
            <person name="Tanaka T."/>
            <person name="Wu J."/>
            <person name="Zhou S."/>
            <person name="Childs K.L."/>
            <person name="Davidson R.M."/>
            <person name="Lin H."/>
            <person name="Quesada-Ocampo L."/>
            <person name="Vaillancourt B."/>
            <person name="Sakai H."/>
            <person name="Lee S.S."/>
            <person name="Kim J."/>
            <person name="Numa H."/>
            <person name="Itoh T."/>
            <person name="Buell C.R."/>
            <person name="Matsumoto T."/>
        </authorList>
    </citation>
    <scope>GENOME REANNOTATION</scope>
    <source>
        <strain>cv. Nipponbare</strain>
    </source>
</reference>
<reference key="5">
    <citation type="journal article" date="2005" name="PLoS Biol.">
        <title>The genomes of Oryza sativa: a history of duplications.</title>
        <authorList>
            <person name="Yu J."/>
            <person name="Wang J."/>
            <person name="Lin W."/>
            <person name="Li S."/>
            <person name="Li H."/>
            <person name="Zhou J."/>
            <person name="Ni P."/>
            <person name="Dong W."/>
            <person name="Hu S."/>
            <person name="Zeng C."/>
            <person name="Zhang J."/>
            <person name="Zhang Y."/>
            <person name="Li R."/>
            <person name="Xu Z."/>
            <person name="Li S."/>
            <person name="Li X."/>
            <person name="Zheng H."/>
            <person name="Cong L."/>
            <person name="Lin L."/>
            <person name="Yin J."/>
            <person name="Geng J."/>
            <person name="Li G."/>
            <person name="Shi J."/>
            <person name="Liu J."/>
            <person name="Lv H."/>
            <person name="Li J."/>
            <person name="Wang J."/>
            <person name="Deng Y."/>
            <person name="Ran L."/>
            <person name="Shi X."/>
            <person name="Wang X."/>
            <person name="Wu Q."/>
            <person name="Li C."/>
            <person name="Ren X."/>
            <person name="Wang J."/>
            <person name="Wang X."/>
            <person name="Li D."/>
            <person name="Liu D."/>
            <person name="Zhang X."/>
            <person name="Ji Z."/>
            <person name="Zhao W."/>
            <person name="Sun Y."/>
            <person name="Zhang Z."/>
            <person name="Bao J."/>
            <person name="Han Y."/>
            <person name="Dong L."/>
            <person name="Ji J."/>
            <person name="Chen P."/>
            <person name="Wu S."/>
            <person name="Liu J."/>
            <person name="Xiao Y."/>
            <person name="Bu D."/>
            <person name="Tan J."/>
            <person name="Yang L."/>
            <person name="Ye C."/>
            <person name="Zhang J."/>
            <person name="Xu J."/>
            <person name="Zhou Y."/>
            <person name="Yu Y."/>
            <person name="Zhang B."/>
            <person name="Zhuang S."/>
            <person name="Wei H."/>
            <person name="Liu B."/>
            <person name="Lei M."/>
            <person name="Yu H."/>
            <person name="Li Y."/>
            <person name="Xu H."/>
            <person name="Wei S."/>
            <person name="He X."/>
            <person name="Fang L."/>
            <person name="Zhang Z."/>
            <person name="Zhang Y."/>
            <person name="Huang X."/>
            <person name="Su Z."/>
            <person name="Tong W."/>
            <person name="Li J."/>
            <person name="Tong Z."/>
            <person name="Li S."/>
            <person name="Ye J."/>
            <person name="Wang L."/>
            <person name="Fang L."/>
            <person name="Lei T."/>
            <person name="Chen C.-S."/>
            <person name="Chen H.-C."/>
            <person name="Xu Z."/>
            <person name="Li H."/>
            <person name="Huang H."/>
            <person name="Zhang F."/>
            <person name="Xu H."/>
            <person name="Li N."/>
            <person name="Zhao C."/>
            <person name="Li S."/>
            <person name="Dong L."/>
            <person name="Huang Y."/>
            <person name="Li L."/>
            <person name="Xi Y."/>
            <person name="Qi Q."/>
            <person name="Li W."/>
            <person name="Zhang B."/>
            <person name="Hu W."/>
            <person name="Zhang Y."/>
            <person name="Tian X."/>
            <person name="Jiao Y."/>
            <person name="Liang X."/>
            <person name="Jin J."/>
            <person name="Gao L."/>
            <person name="Zheng W."/>
            <person name="Hao B."/>
            <person name="Liu S.-M."/>
            <person name="Wang W."/>
            <person name="Yuan L."/>
            <person name="Cao M."/>
            <person name="McDermott J."/>
            <person name="Samudrala R."/>
            <person name="Wang J."/>
            <person name="Wong G.K.-S."/>
            <person name="Yang H."/>
        </authorList>
    </citation>
    <scope>NUCLEOTIDE SEQUENCE [LARGE SCALE GENOMIC DNA]</scope>
    <source>
        <strain>cv. Nipponbare</strain>
    </source>
</reference>
<reference key="6">
    <citation type="journal article" date="2003" name="Science">
        <title>Collection, mapping, and annotation of over 28,000 cDNA clones from japonica rice.</title>
        <authorList>
            <consortium name="The rice full-length cDNA consortium"/>
        </authorList>
    </citation>
    <scope>NUCLEOTIDE SEQUENCE [LARGE SCALE MRNA]</scope>
    <source>
        <strain>cv. Nipponbare</strain>
    </source>
</reference>
<reference key="7">
    <citation type="journal article" date="2007" name="Plant Mol. Biol.">
        <title>Mutations in the rice liguleless gene result in a complete loss of the auricle, ligule, and laminar joint.</title>
        <authorList>
            <person name="Lee J."/>
            <person name="Park J.-J."/>
            <person name="Kim S.L."/>
            <person name="Yim J."/>
            <person name="An G."/>
        </authorList>
    </citation>
    <scope>DISRUPTION PHENOTYPE</scope>
</reference>
<reference key="8">
    <citation type="journal article" date="2008" name="Plant Physiol.">
        <title>Genomic survey and gene expression analysis of the basic leucine zipper transcription factor family in rice.</title>
        <authorList>
            <person name="Nijhawan A."/>
            <person name="Jain M."/>
            <person name="Tyagi A.K."/>
            <person name="Khurana J.P."/>
        </authorList>
    </citation>
    <scope>GENE FAMILY</scope>
    <scope>NOMENCLATURE</scope>
</reference>
<reference key="9">
    <citation type="journal article" date="2012" name="Plant Methods">
        <title>A rice transient assay system identifies a novel domain in NRR required for interaction with NH1/OsNPR1 and inhibition of NH1-mediated transcriptional activation.</title>
        <authorList>
            <person name="Chern M."/>
            <person name="Bai W."/>
            <person name="Sze-To W.H."/>
            <person name="Canlas P.E."/>
            <person name="Bartley L.E."/>
            <person name="Ronald P.C."/>
        </authorList>
    </citation>
    <scope>FUNCTION</scope>
</reference>
<reference key="10">
    <citation type="journal article" date="2014" name="BMC Genomics">
        <title>Interaction specificity and coexpression of rice NPR1 homologs 1 and 3 (NH1 and NH3), TGA transcription factors and negative regulator of resistance (NRR) proteins.</title>
        <authorList>
            <person name="Chern M."/>
            <person name="Bai W."/>
            <person name="Ruan D."/>
            <person name="Oh T."/>
            <person name="Chen X."/>
            <person name="Ronald P.C."/>
        </authorList>
    </citation>
    <scope>INTERACTION WITH NPR1/NH1 AND NPR3/NH3</scope>
</reference>
<dbReference type="EMBL" id="AP003287">
    <property type="protein sequence ID" value="BAD82019.1"/>
    <property type="molecule type" value="Genomic_DNA"/>
</dbReference>
<dbReference type="EMBL" id="AP003794">
    <property type="protein sequence ID" value="BAD82625.1"/>
    <property type="molecule type" value="Genomic_DNA"/>
</dbReference>
<dbReference type="EMBL" id="AP008207">
    <property type="protein sequence ID" value="BAF06782.1"/>
    <property type="molecule type" value="Genomic_DNA"/>
</dbReference>
<dbReference type="EMBL" id="AP014957">
    <property type="protein sequence ID" value="BAS75328.1"/>
    <property type="molecule type" value="Genomic_DNA"/>
</dbReference>
<dbReference type="EMBL" id="CM000138">
    <property type="protein sequence ID" value="EEE55708.1"/>
    <property type="molecule type" value="Genomic_DNA"/>
</dbReference>
<dbReference type="EMBL" id="AK101338">
    <property type="protein sequence ID" value="BAG95017.1"/>
    <property type="molecule type" value="mRNA"/>
</dbReference>
<dbReference type="RefSeq" id="XP_015616943.1">
    <property type="nucleotide sequence ID" value="XM_015761457.1"/>
</dbReference>
<dbReference type="SMR" id="Q5N7C7"/>
<dbReference type="STRING" id="39947.Q5N7C7"/>
<dbReference type="PaxDb" id="39947-Q5N7C7"/>
<dbReference type="EnsemblPlants" id="Os01t0859500-01">
    <property type="protein sequence ID" value="Os01t0859500-01"/>
    <property type="gene ID" value="Os01g0859500"/>
</dbReference>
<dbReference type="Gramene" id="Os01t0859500-01">
    <property type="protein sequence ID" value="Os01t0859500-01"/>
    <property type="gene ID" value="Os01g0859500"/>
</dbReference>
<dbReference type="KEGG" id="dosa:Os01g0859500"/>
<dbReference type="eggNOG" id="ENOG502QRFK">
    <property type="taxonomic scope" value="Eukaryota"/>
</dbReference>
<dbReference type="HOGENOM" id="CLU_024782_0_2_1"/>
<dbReference type="InParanoid" id="Q5N7C7"/>
<dbReference type="OMA" id="ENFIGAE"/>
<dbReference type="OrthoDB" id="2015618at2759"/>
<dbReference type="PlantReactome" id="R-OSA-6788019">
    <property type="pathway name" value="Salicylic acid signaling"/>
</dbReference>
<dbReference type="Proteomes" id="UP000000763">
    <property type="component" value="Chromosome 1"/>
</dbReference>
<dbReference type="Proteomes" id="UP000007752">
    <property type="component" value="Chromosome 1"/>
</dbReference>
<dbReference type="Proteomes" id="UP000059680">
    <property type="component" value="Chromosome 1"/>
</dbReference>
<dbReference type="GO" id="GO:0005634">
    <property type="term" value="C:nucleus"/>
    <property type="evidence" value="ECO:0007669"/>
    <property type="project" value="UniProtKB-SubCell"/>
</dbReference>
<dbReference type="GO" id="GO:0003700">
    <property type="term" value="F:DNA-binding transcription factor activity"/>
    <property type="evidence" value="ECO:0007669"/>
    <property type="project" value="InterPro"/>
</dbReference>
<dbReference type="GO" id="GO:0043565">
    <property type="term" value="F:sequence-specific DNA binding"/>
    <property type="evidence" value="ECO:0007669"/>
    <property type="project" value="InterPro"/>
</dbReference>
<dbReference type="GO" id="GO:0006952">
    <property type="term" value="P:defense response"/>
    <property type="evidence" value="ECO:0007669"/>
    <property type="project" value="UniProtKB-KW"/>
</dbReference>
<dbReference type="GO" id="GO:0006351">
    <property type="term" value="P:DNA-templated transcription"/>
    <property type="evidence" value="ECO:0007669"/>
    <property type="project" value="InterPro"/>
</dbReference>
<dbReference type="GO" id="GO:0045893">
    <property type="term" value="P:positive regulation of DNA-templated transcription"/>
    <property type="evidence" value="ECO:0000314"/>
    <property type="project" value="UniProtKB"/>
</dbReference>
<dbReference type="CDD" id="cd14708">
    <property type="entry name" value="bZIP_HBP1b-like"/>
    <property type="match status" value="1"/>
</dbReference>
<dbReference type="FunFam" id="1.20.5.170:FF:000019">
    <property type="entry name" value="BZIP family transcription factor"/>
    <property type="match status" value="1"/>
</dbReference>
<dbReference type="Gene3D" id="1.20.5.170">
    <property type="match status" value="1"/>
</dbReference>
<dbReference type="InterPro" id="IPR004827">
    <property type="entry name" value="bZIP"/>
</dbReference>
<dbReference type="InterPro" id="IPR046347">
    <property type="entry name" value="bZIP_sf"/>
</dbReference>
<dbReference type="InterPro" id="IPR025422">
    <property type="entry name" value="TGA_domain"/>
</dbReference>
<dbReference type="PANTHER" id="PTHR45693">
    <property type="entry name" value="TRANSCRIPTION FACTOR TGA9"/>
    <property type="match status" value="1"/>
</dbReference>
<dbReference type="PANTHER" id="PTHR45693:SF9">
    <property type="entry name" value="TRANSCRIPTION FACTOR TGA9"/>
    <property type="match status" value="1"/>
</dbReference>
<dbReference type="Pfam" id="PF00170">
    <property type="entry name" value="bZIP_1"/>
    <property type="match status" value="1"/>
</dbReference>
<dbReference type="Pfam" id="PF14144">
    <property type="entry name" value="DOG1"/>
    <property type="match status" value="1"/>
</dbReference>
<dbReference type="SMART" id="SM00338">
    <property type="entry name" value="BRLZ"/>
    <property type="match status" value="1"/>
</dbReference>
<dbReference type="SUPFAM" id="SSF57959">
    <property type="entry name" value="Leucine zipper domain"/>
    <property type="match status" value="1"/>
</dbReference>
<dbReference type="PROSITE" id="PS50217">
    <property type="entry name" value="BZIP"/>
    <property type="match status" value="1"/>
</dbReference>
<dbReference type="PROSITE" id="PS00036">
    <property type="entry name" value="BZIP_BASIC"/>
    <property type="match status" value="1"/>
</dbReference>
<dbReference type="PROSITE" id="PS51806">
    <property type="entry name" value="DOG1"/>
    <property type="match status" value="1"/>
</dbReference>
<keyword id="KW-0238">DNA-binding</keyword>
<keyword id="KW-0539">Nucleus</keyword>
<keyword id="KW-0611">Plant defense</keyword>
<keyword id="KW-1185">Reference proteome</keyword>
<keyword id="KW-0804">Transcription</keyword>
<keyword id="KW-0805">Transcription regulation</keyword>
<sequence>MVQGEESSWRMAASTHHERAIPLNQALAYGVQAHASPSVAAAPPASFLDFQPAAAAAAYFGELEEALIHGANAGGVVDPGMIRADVHSKSAAAAATAGYLAARPPTLEIFPSWPMRQQQQLHSGNSQSVGSTTDSSSAQNTMPQMELVSPASIRASSEHQHQQQQPGQEVMMVTTDDYSYKPGLAAASPSFQQQHQLQHHQQQQLHGGGDHDKRKHGSTRKDGKSVDAKTERRLAQNREAARKSRLRKKAYVQNLETSRVRLQQIEQELQRARSQGLFLGGCRAAGDMSSGAAMFDMEYARWLDDDSKRLTDLRGGLQAHLLDTNLGLIVEECMQHYDELFQLKAALARSDVFHLLTGTWATPAERCFLWMGGFRPSDLLKILIQQLDPLTEQQMLGIYSLQQSSEQAEEALAQGLQQLHQSLADTVAAGTLNDGPGVPNYMSLMAIALDKLASLESFYQQADNLRQQTLHQLRRILTTRQAARCFLSIGEYYRRLRALSNLWSSRPRENFIGTESVSPTGTELQPMHNQPQQNQYSGF</sequence>
<evidence type="ECO:0000250" key="1">
    <source>
        <dbReference type="UniProtKB" id="Q7X993"/>
    </source>
</evidence>
<evidence type="ECO:0000255" key="2">
    <source>
        <dbReference type="PROSITE-ProRule" id="PRU00978"/>
    </source>
</evidence>
<evidence type="ECO:0000255" key="3">
    <source>
        <dbReference type="PROSITE-ProRule" id="PRU01147"/>
    </source>
</evidence>
<evidence type="ECO:0000256" key="4">
    <source>
        <dbReference type="SAM" id="MobiDB-lite"/>
    </source>
</evidence>
<evidence type="ECO:0000269" key="5">
    <source>
    </source>
</evidence>
<evidence type="ECO:0000269" key="6">
    <source>
    </source>
</evidence>
<evidence type="ECO:0000269" key="7">
    <source>
    </source>
</evidence>
<evidence type="ECO:0000303" key="8">
    <source>
    </source>
</evidence>
<evidence type="ECO:0000303" key="9">
    <source>
    </source>
</evidence>
<evidence type="ECO:0000303" key="10">
    <source>
    </source>
</evidence>
<evidence type="ECO:0000305" key="11"/>
<evidence type="ECO:0000312" key="12">
    <source>
        <dbReference type="EMBL" id="BAD82019.1"/>
    </source>
</evidence>
<evidence type="ECO:0000312" key="13">
    <source>
        <dbReference type="EMBL" id="BAD82625.1"/>
    </source>
</evidence>
<evidence type="ECO:0000312" key="14">
    <source>
        <dbReference type="EMBL" id="BAF06782.1"/>
    </source>
</evidence>
<evidence type="ECO:0000312" key="15">
    <source>
        <dbReference type="EMBL" id="EEE55708.1"/>
    </source>
</evidence>
<organism evidence="13">
    <name type="scientific">Oryza sativa subsp. japonica</name>
    <name type="common">Rice</name>
    <dbReference type="NCBI Taxonomy" id="39947"/>
    <lineage>
        <taxon>Eukaryota</taxon>
        <taxon>Viridiplantae</taxon>
        <taxon>Streptophyta</taxon>
        <taxon>Embryophyta</taxon>
        <taxon>Tracheophyta</taxon>
        <taxon>Spermatophyta</taxon>
        <taxon>Magnoliopsida</taxon>
        <taxon>Liliopsida</taxon>
        <taxon>Poales</taxon>
        <taxon>Poaceae</taxon>
        <taxon>BOP clade</taxon>
        <taxon>Oryzoideae</taxon>
        <taxon>Oryzeae</taxon>
        <taxon>Oryzinae</taxon>
        <taxon>Oryza</taxon>
        <taxon>Oryza sativa</taxon>
    </lineage>
</organism>
<proteinExistence type="evidence at protein level"/>